<gene>
    <name evidence="1" type="primary">rho</name>
</gene>
<protein>
    <recommendedName>
        <fullName evidence="1">Transcription termination factor Rho</fullName>
        <ecNumber evidence="1">3.6.4.-</ecNumber>
    </recommendedName>
    <alternativeName>
        <fullName evidence="1">ATP-dependent helicase Rho</fullName>
    </alternativeName>
</protein>
<comment type="function">
    <text evidence="1">Facilitates transcription termination by a mechanism that involves Rho binding to the nascent RNA, activation of Rho's RNA-dependent ATPase activity, and release of the mRNA from the DNA template.</text>
</comment>
<comment type="subunit">
    <text evidence="1">Homohexamer. The homohexamer assembles into an open ring structure.</text>
</comment>
<comment type="similarity">
    <text evidence="1">Belongs to the Rho family.</text>
</comment>
<dbReference type="EC" id="3.6.4.-" evidence="1"/>
<dbReference type="EMBL" id="L27277">
    <property type="protein sequence ID" value="AAB18671.1"/>
    <property type="molecule type" value="Genomic_DNA"/>
</dbReference>
<dbReference type="SMR" id="P52154"/>
<dbReference type="GO" id="GO:0005524">
    <property type="term" value="F:ATP binding"/>
    <property type="evidence" value="ECO:0007669"/>
    <property type="project" value="UniProtKB-UniRule"/>
</dbReference>
<dbReference type="GO" id="GO:0016887">
    <property type="term" value="F:ATP hydrolysis activity"/>
    <property type="evidence" value="ECO:0007669"/>
    <property type="project" value="InterPro"/>
</dbReference>
<dbReference type="GO" id="GO:0008186">
    <property type="term" value="F:ATP-dependent activity, acting on RNA"/>
    <property type="evidence" value="ECO:0007669"/>
    <property type="project" value="InterPro"/>
</dbReference>
<dbReference type="GO" id="GO:0004386">
    <property type="term" value="F:helicase activity"/>
    <property type="evidence" value="ECO:0007669"/>
    <property type="project" value="UniProtKB-UniRule"/>
</dbReference>
<dbReference type="GO" id="GO:0003723">
    <property type="term" value="F:RNA binding"/>
    <property type="evidence" value="ECO:0007669"/>
    <property type="project" value="UniProtKB-UniRule"/>
</dbReference>
<dbReference type="GO" id="GO:0006353">
    <property type="term" value="P:DNA-templated transcription termination"/>
    <property type="evidence" value="ECO:0007669"/>
    <property type="project" value="UniProtKB-UniRule"/>
</dbReference>
<dbReference type="CDD" id="cd01128">
    <property type="entry name" value="rho_factor_C"/>
    <property type="match status" value="1"/>
</dbReference>
<dbReference type="Gene3D" id="2.40.50.140">
    <property type="entry name" value="Nucleic acid-binding proteins"/>
    <property type="match status" value="1"/>
</dbReference>
<dbReference type="Gene3D" id="3.40.50.300">
    <property type="entry name" value="P-loop containing nucleotide triphosphate hydrolases"/>
    <property type="match status" value="1"/>
</dbReference>
<dbReference type="HAMAP" id="MF_01884">
    <property type="entry name" value="Rho"/>
    <property type="match status" value="1"/>
</dbReference>
<dbReference type="InterPro" id="IPR003593">
    <property type="entry name" value="AAA+_ATPase"/>
</dbReference>
<dbReference type="InterPro" id="IPR000194">
    <property type="entry name" value="ATPase_F1/V1/A1_a/bsu_nucl-bd"/>
</dbReference>
<dbReference type="InterPro" id="IPR011129">
    <property type="entry name" value="CSD"/>
</dbReference>
<dbReference type="InterPro" id="IPR012340">
    <property type="entry name" value="NA-bd_OB-fold"/>
</dbReference>
<dbReference type="InterPro" id="IPR027417">
    <property type="entry name" value="P-loop_NTPase"/>
</dbReference>
<dbReference type="InterPro" id="IPR011112">
    <property type="entry name" value="Rho-like_N"/>
</dbReference>
<dbReference type="InterPro" id="IPR041703">
    <property type="entry name" value="Rho_factor_ATP-bd"/>
</dbReference>
<dbReference type="InterPro" id="IPR011113">
    <property type="entry name" value="Rho_RNA-bd"/>
</dbReference>
<dbReference type="InterPro" id="IPR004665">
    <property type="entry name" value="Term_rho"/>
</dbReference>
<dbReference type="NCBIfam" id="NF006886">
    <property type="entry name" value="PRK09376.1"/>
    <property type="match status" value="1"/>
</dbReference>
<dbReference type="NCBIfam" id="TIGR00767">
    <property type="entry name" value="rho"/>
    <property type="match status" value="1"/>
</dbReference>
<dbReference type="PANTHER" id="PTHR46425">
    <property type="entry name" value="TRANSCRIPTION TERMINATION FACTOR RHO"/>
    <property type="match status" value="1"/>
</dbReference>
<dbReference type="PANTHER" id="PTHR46425:SF1">
    <property type="entry name" value="TRANSCRIPTION TERMINATION FACTOR RHO"/>
    <property type="match status" value="1"/>
</dbReference>
<dbReference type="Pfam" id="PF00006">
    <property type="entry name" value="ATP-synt_ab"/>
    <property type="match status" value="1"/>
</dbReference>
<dbReference type="Pfam" id="PF07498">
    <property type="entry name" value="Rho_N"/>
    <property type="match status" value="1"/>
</dbReference>
<dbReference type="Pfam" id="PF07497">
    <property type="entry name" value="Rho_RNA_bind"/>
    <property type="match status" value="1"/>
</dbReference>
<dbReference type="SMART" id="SM00382">
    <property type="entry name" value="AAA"/>
    <property type="match status" value="1"/>
</dbReference>
<dbReference type="SMART" id="SM00357">
    <property type="entry name" value="CSP"/>
    <property type="match status" value="1"/>
</dbReference>
<dbReference type="SMART" id="SM00959">
    <property type="entry name" value="Rho_N"/>
    <property type="match status" value="1"/>
</dbReference>
<dbReference type="SUPFAM" id="SSF50249">
    <property type="entry name" value="Nucleic acid-binding proteins"/>
    <property type="match status" value="1"/>
</dbReference>
<dbReference type="SUPFAM" id="SSF52540">
    <property type="entry name" value="P-loop containing nucleoside triphosphate hydrolases"/>
    <property type="match status" value="1"/>
</dbReference>
<dbReference type="PROSITE" id="PS51856">
    <property type="entry name" value="RHO_RNA_BD"/>
    <property type="match status" value="1"/>
</dbReference>
<reference key="1">
    <citation type="journal article" date="1996" name="J. Biol. Chem.">
        <title>Characterization of an unusual Rho factor from the high G + C Gram-positive bacterium Micrococcus luteus.</title>
        <authorList>
            <person name="Nowatzke W.L."/>
            <person name="Richardson J.P."/>
        </authorList>
    </citation>
    <scope>NUCLEOTIDE SEQUENCE [GENOMIC DNA]</scope>
    <scope>PROTEIN SEQUENCE OF 2-6 AND 290-298</scope>
    <source>
        <strain>EM</strain>
    </source>
</reference>
<reference key="2">
    <citation type="journal article" date="1994" name="J. Bacteriol.">
        <title>Phylogenetic analysis of sequences from diverse bacteria with homology to the Escherichia coli rho gene.</title>
        <authorList>
            <person name="Opperman T."/>
            <person name="Richardson J.P."/>
        </authorList>
    </citation>
    <scope>NUCLEOTIDE SEQUENCE [GENOMIC DNA] OF 206-691</scope>
    <source>
        <strain>EM</strain>
    </source>
</reference>
<reference key="3">
    <citation type="submission" date="1996-11" db="EMBL/GenBank/DDBJ databases">
        <authorList>
            <person name="Nowatzke W.L."/>
        </authorList>
    </citation>
    <scope>SEQUENCE REVISION TO 501</scope>
</reference>
<feature type="initiator methionine" description="Removed" evidence="4">
    <location>
        <position position="1"/>
    </location>
</feature>
<feature type="chain" id="PRO_0000188968" description="Transcription termination factor Rho">
    <location>
        <begin position="2"/>
        <end position="691"/>
    </location>
</feature>
<feature type="domain" description="Rho RNA-BD" evidence="2">
    <location>
        <begin position="307"/>
        <end position="390"/>
    </location>
</feature>
<feature type="region of interest" description="Disordered" evidence="3">
    <location>
        <begin position="48"/>
        <end position="303"/>
    </location>
</feature>
<feature type="compositionally biased region" description="Basic and acidic residues" evidence="3">
    <location>
        <begin position="50"/>
        <end position="64"/>
    </location>
</feature>
<feature type="compositionally biased region" description="Low complexity" evidence="3">
    <location>
        <begin position="65"/>
        <end position="92"/>
    </location>
</feature>
<feature type="compositionally biased region" description="Low complexity" evidence="3">
    <location>
        <begin position="105"/>
        <end position="119"/>
    </location>
</feature>
<feature type="compositionally biased region" description="Basic and acidic residues" evidence="3">
    <location>
        <begin position="120"/>
        <end position="158"/>
    </location>
</feature>
<feature type="compositionally biased region" description="Basic and acidic residues" evidence="3">
    <location>
        <begin position="188"/>
        <end position="273"/>
    </location>
</feature>
<feature type="binding site" evidence="1">
    <location>
        <begin position="433"/>
        <end position="438"/>
    </location>
    <ligand>
        <name>ATP</name>
        <dbReference type="ChEBI" id="CHEBI:30616"/>
    </ligand>
</feature>
<feature type="binding site" evidence="1">
    <location>
        <begin position="445"/>
        <end position="450"/>
    </location>
    <ligand>
        <name>ATP</name>
        <dbReference type="ChEBI" id="CHEBI:30616"/>
    </ligand>
</feature>
<feature type="binding site" evidence="1">
    <location>
        <position position="476"/>
    </location>
    <ligand>
        <name>ATP</name>
        <dbReference type="ChEBI" id="CHEBI:30616"/>
    </ligand>
</feature>
<feature type="sequence conflict" description="In Ref. 1; AA sequence." evidence="5" ref="1">
    <original>G</original>
    <variation>P</variation>
    <location>
        <position position="292"/>
    </location>
</feature>
<keyword id="KW-0067">ATP-binding</keyword>
<keyword id="KW-0903">Direct protein sequencing</keyword>
<keyword id="KW-0347">Helicase</keyword>
<keyword id="KW-0378">Hydrolase</keyword>
<keyword id="KW-0547">Nucleotide-binding</keyword>
<keyword id="KW-0694">RNA-binding</keyword>
<keyword id="KW-0804">Transcription</keyword>
<keyword id="KW-0805">Transcription regulation</keyword>
<keyword id="KW-0806">Transcription termination</keyword>
<name>RHO_MICLU</name>
<evidence type="ECO:0000255" key="1">
    <source>
        <dbReference type="HAMAP-Rule" id="MF_01884"/>
    </source>
</evidence>
<evidence type="ECO:0000255" key="2">
    <source>
        <dbReference type="PROSITE-ProRule" id="PRU01203"/>
    </source>
</evidence>
<evidence type="ECO:0000256" key="3">
    <source>
        <dbReference type="SAM" id="MobiDB-lite"/>
    </source>
</evidence>
<evidence type="ECO:0000269" key="4">
    <source>
    </source>
</evidence>
<evidence type="ECO:0000305" key="5"/>
<proteinExistence type="evidence at protein level"/>
<organism>
    <name type="scientific">Micrococcus luteus</name>
    <name type="common">Micrococcus lysodeikticus</name>
    <dbReference type="NCBI Taxonomy" id="1270"/>
    <lineage>
        <taxon>Bacteria</taxon>
        <taxon>Bacillati</taxon>
        <taxon>Actinomycetota</taxon>
        <taxon>Actinomycetes</taxon>
        <taxon>Micrococcales</taxon>
        <taxon>Micrococcaceae</taxon>
        <taxon>Micrococcus</taxon>
    </lineage>
</organism>
<sequence length="691" mass="75162">MTESTEQTTPTNGGGLASLKLAQLQALASQLGIAGGSRMRKADLVTAISDHQRGGSVADRDAAERAAQAPAAPAAETAPAAASSEDAAPAAERPARRRSRRADADTSAPAAAQDGQPQAEAREAQTEQAPRETASDQDRSGGSEARDEGEDRPQSERRSRGRRRAGDDDAQQGQDRRSDGAQGEDGADADRRGDREDRDDNGRENGRGRNGRNGRDRDNGRDRENGRENSRDRENGRDGSREQRGDKSEDGGRGDGGRGDRSRRDDRDDEGGRNRRNRRNRNERGRNRRGRGGPEVDETELTEDDVLQPVAGILDVLDNYAFVRTSGYLPGPNDVYVSLAMVKKYGLRKGDAVVGPIAPRDGEKQQHHGGGSNRQKFNALVKISSVNGQPAVEHPQRVEFGKLVPLYPQERLRLETDPKLIGPRVIDLVSPIGKGQRGLIVSPPKAGKTMILQSIANAIKTNNPEVHLMMVLVDERPEEVTDMQRSVDGEVIASTFDRPADDHTTLAELAIERAKRLVEMGRDVVVLLDSMTRLGRAYNLAAPASGRILSGGVDSSALYPPKKFFGAARNIENGGSLTILATALVETGSRMDEVIFEEFKGTGNMELRLSRHLAERRIFPAVDVNASGTRREEALLSQEEVKIMWKLRRVLSGLEQQQALDLLTNKIKDTASNAEFLMLVSKTTLGSKGDD</sequence>
<accession>P52154</accession>